<comment type="function">
    <text evidence="1">Chaperone that functions as a gatekeeper on the periplasmic side of the SecYEG translocon. Facilitates the translocation of precursor proteins across SecYEG by interacting with the translocating substrate. Also plays a role in the release of newly synthesized secreted proteins at the periplasmic exit site of the Sec translocon.</text>
</comment>
<comment type="subunit">
    <text evidence="1">Interacts with the SecYEG translocon (By similarity). Binds to the lateral gate of SecY (By similarity). Forms a complex with YfgM (By similarity).</text>
</comment>
<comment type="subcellular location">
    <subcellularLocation>
        <location evidence="1">Cell inner membrane</location>
        <topology evidence="1">Single-pass type II membrane protein</topology>
        <orientation evidence="1">Periplasmic side</orientation>
    </subcellularLocation>
    <text evidence="1">Located at the lateral gate of SecY.</text>
</comment>
<comment type="similarity">
    <text evidence="4">Belongs to the PpiD chaperone family.</text>
</comment>
<comment type="sequence caution" evidence="4">
    <conflict type="frameshift">
        <sequence resource="EMBL-CDS" id="AAC22665"/>
    </conflict>
</comment>
<protein>
    <recommendedName>
        <fullName evidence="1">Periplasmic chaperone PpiD</fullName>
    </recommendedName>
    <alternativeName>
        <fullName evidence="1">Periplasmic folding chaperone</fullName>
    </alternativeName>
</protein>
<feature type="chain" id="PRO_0000193426" description="Periplasmic chaperone PpiD">
    <location>
        <begin position="1"/>
        <end position="622"/>
    </location>
</feature>
<feature type="topological domain" description="Cytoplasmic" evidence="1">
    <location>
        <begin position="1"/>
        <end position="16"/>
    </location>
</feature>
<feature type="transmembrane region" description="Helical" evidence="2">
    <location>
        <begin position="17"/>
        <end position="37"/>
    </location>
</feature>
<feature type="topological domain" description="Periplasmic" evidence="1">
    <location>
        <begin position="38"/>
        <end position="622"/>
    </location>
</feature>
<feature type="domain" description="PpiC" evidence="3">
    <location>
        <begin position="270"/>
        <end position="356"/>
    </location>
</feature>
<keyword id="KW-0997">Cell inner membrane</keyword>
<keyword id="KW-1003">Cell membrane</keyword>
<keyword id="KW-0143">Chaperone</keyword>
<keyword id="KW-0472">Membrane</keyword>
<keyword id="KW-1185">Reference proteome</keyword>
<keyword id="KW-0812">Transmembrane</keyword>
<keyword id="KW-1133">Transmembrane helix</keyword>
<dbReference type="EMBL" id="L42023">
    <property type="protein sequence ID" value="AAC22665.1"/>
    <property type="status" value="ALT_FRAME"/>
    <property type="molecule type" value="Genomic_DNA"/>
</dbReference>
<dbReference type="PIR" id="B64018">
    <property type="entry name" value="B64018"/>
</dbReference>
<dbReference type="RefSeq" id="NP_439165.2">
    <property type="nucleotide sequence ID" value="NC_000907.1"/>
</dbReference>
<dbReference type="STRING" id="71421.HI_1004"/>
<dbReference type="DNASU" id="950512"/>
<dbReference type="EnsemblBacteria" id="AAC22665">
    <property type="protein sequence ID" value="AAC22665"/>
    <property type="gene ID" value="HI_1004"/>
</dbReference>
<dbReference type="KEGG" id="hin:HI_1004"/>
<dbReference type="PATRIC" id="fig|71421.8.peg.1047"/>
<dbReference type="eggNOG" id="COG0760">
    <property type="taxonomic scope" value="Bacteria"/>
</dbReference>
<dbReference type="HOGENOM" id="CLU_023843_1_1_6"/>
<dbReference type="OrthoDB" id="9812372at2"/>
<dbReference type="PhylomeDB" id="P44092"/>
<dbReference type="BioCyc" id="HINF71421:G1GJ1-1044-MONOMER"/>
<dbReference type="Proteomes" id="UP000000579">
    <property type="component" value="Chromosome"/>
</dbReference>
<dbReference type="GO" id="GO:0005886">
    <property type="term" value="C:plasma membrane"/>
    <property type="evidence" value="ECO:0007669"/>
    <property type="project" value="UniProtKB-SubCell"/>
</dbReference>
<dbReference type="GO" id="GO:0003755">
    <property type="term" value="F:peptidyl-prolyl cis-trans isomerase activity"/>
    <property type="evidence" value="ECO:0007669"/>
    <property type="project" value="InterPro"/>
</dbReference>
<dbReference type="GO" id="GO:0061077">
    <property type="term" value="P:chaperone-mediated protein folding"/>
    <property type="evidence" value="ECO:0000318"/>
    <property type="project" value="GO_Central"/>
</dbReference>
<dbReference type="Gene3D" id="3.10.50.40">
    <property type="match status" value="1"/>
</dbReference>
<dbReference type="Gene3D" id="1.10.4030.10">
    <property type="entry name" value="Porin chaperone SurA, peptide-binding domain"/>
    <property type="match status" value="1"/>
</dbReference>
<dbReference type="InterPro" id="IPR046357">
    <property type="entry name" value="PPIase_dom_sf"/>
</dbReference>
<dbReference type="InterPro" id="IPR000297">
    <property type="entry name" value="PPIase_PpiC"/>
</dbReference>
<dbReference type="InterPro" id="IPR023058">
    <property type="entry name" value="PPIase_PpiC_CS"/>
</dbReference>
<dbReference type="InterPro" id="IPR052029">
    <property type="entry name" value="PpiD_chaperone"/>
</dbReference>
<dbReference type="InterPro" id="IPR027304">
    <property type="entry name" value="Trigger_fact/SurA_dom_sf"/>
</dbReference>
<dbReference type="PANTHER" id="PTHR47529">
    <property type="entry name" value="PEPTIDYL-PROLYL CIS-TRANS ISOMERASE D"/>
    <property type="match status" value="1"/>
</dbReference>
<dbReference type="PANTHER" id="PTHR47529:SF1">
    <property type="entry name" value="PERIPLASMIC CHAPERONE PPID"/>
    <property type="match status" value="1"/>
</dbReference>
<dbReference type="Pfam" id="PF13145">
    <property type="entry name" value="Rotamase_2"/>
    <property type="match status" value="1"/>
</dbReference>
<dbReference type="Pfam" id="PF13624">
    <property type="entry name" value="SurA_N_3"/>
    <property type="match status" value="1"/>
</dbReference>
<dbReference type="SUPFAM" id="SSF54534">
    <property type="entry name" value="FKBP-like"/>
    <property type="match status" value="1"/>
</dbReference>
<dbReference type="SUPFAM" id="SSF109998">
    <property type="entry name" value="Triger factor/SurA peptide-binding domain-like"/>
    <property type="match status" value="1"/>
</dbReference>
<dbReference type="PROSITE" id="PS01096">
    <property type="entry name" value="PPIC_PPIASE_1"/>
    <property type="match status" value="1"/>
</dbReference>
<dbReference type="PROSITE" id="PS50198">
    <property type="entry name" value="PPIC_PPIASE_2"/>
    <property type="match status" value="1"/>
</dbReference>
<sequence length="622" mass="69590">MLIEKMHNLTNSKISKFILGLIAVSFLVGGMSGYLFSSNDTYAAKVNGEVISQQDFLNRYNQEFEIRAQREGEAFVAQSDSPEFVTALRQNIVNLMIDQELLRQYVKELKLGVSDEMIKRAIVTDPNFQVKGKFDNAVYQRILQQNHLTSDGYASILRASLPLEQIQNGVANSEFIVPAQVKNSAEVFFQKRLARLATLSLADEMAKQSVSDDEIKTYYEANQKSFVQPEQVKVQYIDLSADNISRNLQVTDVEIAQYYQDNKAQFMTQHLAHIQFANEQDAKVAYEELQKGANFADVAKAKSLDKISGENGGDLGWVNENELPKAFEDAAAALQVGQYSQPINVDGNYHIVLVQERKAQSLENVKAQIADLVRKSLMESRYFSLEKQASDKAFEDSKSLNTAAQAAGVKVQESDYFSRQNVPAGLNFPNVIYTIFESDTTNVGMNSEPINVGDYHTIIVRVLDRKAEGVKSLEEAKIDIETFLKRQKAENALNGKAQQAVKKLSENPESKVDGINFSSEQTFTLSENKDPILTNGIFSIAKPESSKALYQVVHNSNGDVVVVALNKVEQGSLSEKELSQFAMQLLRSHQSELQVQLIQGLRERAKIEVNDSFINQDDEAQQ</sequence>
<gene>
    <name type="primary">ppiD</name>
    <name type="ordered locus">HI_1004</name>
</gene>
<organism>
    <name type="scientific">Haemophilus influenzae (strain ATCC 51907 / DSM 11121 / KW20 / Rd)</name>
    <dbReference type="NCBI Taxonomy" id="71421"/>
    <lineage>
        <taxon>Bacteria</taxon>
        <taxon>Pseudomonadati</taxon>
        <taxon>Pseudomonadota</taxon>
        <taxon>Gammaproteobacteria</taxon>
        <taxon>Pasteurellales</taxon>
        <taxon>Pasteurellaceae</taxon>
        <taxon>Haemophilus</taxon>
    </lineage>
</organism>
<reference key="1">
    <citation type="journal article" date="1995" name="Science">
        <title>Whole-genome random sequencing and assembly of Haemophilus influenzae Rd.</title>
        <authorList>
            <person name="Fleischmann R.D."/>
            <person name="Adams M.D."/>
            <person name="White O."/>
            <person name="Clayton R.A."/>
            <person name="Kirkness E.F."/>
            <person name="Kerlavage A.R."/>
            <person name="Bult C.J."/>
            <person name="Tomb J.-F."/>
            <person name="Dougherty B.A."/>
            <person name="Merrick J.M."/>
            <person name="McKenney K."/>
            <person name="Sutton G.G."/>
            <person name="FitzHugh W."/>
            <person name="Fields C.A."/>
            <person name="Gocayne J.D."/>
            <person name="Scott J.D."/>
            <person name="Shirley R."/>
            <person name="Liu L.-I."/>
            <person name="Glodek A."/>
            <person name="Kelley J.M."/>
            <person name="Weidman J.F."/>
            <person name="Phillips C.A."/>
            <person name="Spriggs T."/>
            <person name="Hedblom E."/>
            <person name="Cotton M.D."/>
            <person name="Utterback T.R."/>
            <person name="Hanna M.C."/>
            <person name="Nguyen D.T."/>
            <person name="Saudek D.M."/>
            <person name="Brandon R.C."/>
            <person name="Fine L.D."/>
            <person name="Fritchman J.L."/>
            <person name="Fuhrmann J.L."/>
            <person name="Geoghagen N.S.M."/>
            <person name="Gnehm C.L."/>
            <person name="McDonald L.A."/>
            <person name="Small K.V."/>
            <person name="Fraser C.M."/>
            <person name="Smith H.O."/>
            <person name="Venter J.C."/>
        </authorList>
    </citation>
    <scope>NUCLEOTIDE SEQUENCE [LARGE SCALE GENOMIC DNA]</scope>
    <source>
        <strain>ATCC 51907 / DSM 11121 / KW20 / Rd</strain>
    </source>
</reference>
<accession>P44092</accession>
<name>PPID_HAEIN</name>
<proteinExistence type="inferred from homology"/>
<evidence type="ECO:0000250" key="1">
    <source>
        <dbReference type="UniProtKB" id="P0ADY1"/>
    </source>
</evidence>
<evidence type="ECO:0000255" key="2"/>
<evidence type="ECO:0000255" key="3">
    <source>
        <dbReference type="PROSITE-ProRule" id="PRU00278"/>
    </source>
</evidence>
<evidence type="ECO:0000305" key="4"/>